<accession>O74000</accession>
<evidence type="ECO:0000255" key="1">
    <source>
        <dbReference type="HAMAP-Rule" id="MF_00794"/>
    </source>
</evidence>
<evidence type="ECO:0000305" key="2"/>
<feature type="chain" id="PRO_0000157113" description="Putative antitoxin PH1062.1">
    <location>
        <begin position="1"/>
        <end position="75"/>
    </location>
</feature>
<name>Y106A_PYRHO</name>
<comment type="function">
    <text evidence="1">Possibly the antitoxin component of a type II toxin-antitoxin (TA) system.</text>
</comment>
<comment type="similarity">
    <text evidence="1">Belongs to the UPF0330 family.</text>
</comment>
<comment type="sequence caution" evidence="2">
    <conflict type="frameshift">
        <sequence resource="EMBL-CDS" id="BAA30161"/>
    </conflict>
</comment>
<proteinExistence type="inferred from homology"/>
<keyword id="KW-1277">Toxin-antitoxin system</keyword>
<protein>
    <recommendedName>
        <fullName evidence="1">Putative antitoxin PH1062.1</fullName>
    </recommendedName>
</protein>
<gene>
    <name type="ordered locus">PH1062.1</name>
    <name type="ORF">PHS031</name>
</gene>
<dbReference type="EMBL" id="BA000001">
    <property type="protein sequence ID" value="BAA30161.1"/>
    <property type="status" value="ALT_FRAME"/>
    <property type="molecule type" value="Genomic_DNA"/>
</dbReference>
<dbReference type="PIR" id="C71100">
    <property type="entry name" value="C71100"/>
</dbReference>
<dbReference type="SMR" id="O74000"/>
<dbReference type="STRING" id="70601.gene:9378021"/>
<dbReference type="EnsemblBacteria" id="BAA30161">
    <property type="protein sequence ID" value="BAA30161"/>
    <property type="gene ID" value="BAA30161"/>
</dbReference>
<dbReference type="KEGG" id="pho:PHS031"/>
<dbReference type="eggNOG" id="arCOG02681">
    <property type="taxonomic scope" value="Archaea"/>
</dbReference>
<dbReference type="Proteomes" id="UP000000752">
    <property type="component" value="Chromosome"/>
</dbReference>
<dbReference type="HAMAP" id="MF_00794">
    <property type="entry name" value="UPF0330"/>
    <property type="match status" value="1"/>
</dbReference>
<dbReference type="InterPro" id="IPR003847">
    <property type="entry name" value="Put_antitoxin"/>
</dbReference>
<dbReference type="NCBIfam" id="NF010250">
    <property type="entry name" value="PRK13696.1-2"/>
    <property type="match status" value="1"/>
</dbReference>
<dbReference type="Pfam" id="PF02697">
    <property type="entry name" value="VAPB_antitox"/>
    <property type="match status" value="1"/>
</dbReference>
<reference key="1">
    <citation type="journal article" date="1998" name="DNA Res.">
        <title>Complete sequence and gene organization of the genome of a hyper-thermophilic archaebacterium, Pyrococcus horikoshii OT3.</title>
        <authorList>
            <person name="Kawarabayasi Y."/>
            <person name="Sawada M."/>
            <person name="Horikawa H."/>
            <person name="Haikawa Y."/>
            <person name="Hino Y."/>
            <person name="Yamamoto S."/>
            <person name="Sekine M."/>
            <person name="Baba S."/>
            <person name="Kosugi H."/>
            <person name="Hosoyama A."/>
            <person name="Nagai Y."/>
            <person name="Sakai M."/>
            <person name="Ogura K."/>
            <person name="Otsuka R."/>
            <person name="Nakazawa H."/>
            <person name="Takamiya M."/>
            <person name="Ohfuku Y."/>
            <person name="Funahashi T."/>
            <person name="Tanaka T."/>
            <person name="Kudoh Y."/>
            <person name="Yamazaki J."/>
            <person name="Kushida N."/>
            <person name="Oguchi A."/>
            <person name="Aoki K."/>
            <person name="Yoshizawa T."/>
            <person name="Nakamura Y."/>
            <person name="Robb F.T."/>
            <person name="Horikoshi K."/>
            <person name="Masuchi Y."/>
            <person name="Shizuya H."/>
            <person name="Kikuchi H."/>
        </authorList>
    </citation>
    <scope>NUCLEOTIDE SEQUENCE [LARGE SCALE GENOMIC DNA]</scope>
    <source>
        <strain>ATCC 700860 / DSM 12428 / JCM 9974 / NBRC 100139 / OT-3</strain>
    </source>
</reference>
<organism>
    <name type="scientific">Pyrococcus horikoshii (strain ATCC 700860 / DSM 12428 / JCM 9974 / NBRC 100139 / OT-3)</name>
    <dbReference type="NCBI Taxonomy" id="70601"/>
    <lineage>
        <taxon>Archaea</taxon>
        <taxon>Methanobacteriati</taxon>
        <taxon>Methanobacteriota</taxon>
        <taxon>Thermococci</taxon>
        <taxon>Thermococcales</taxon>
        <taxon>Thermococcaceae</taxon>
        <taxon>Pyrococcus</taxon>
    </lineage>
</organism>
<sequence length="75" mass="8668">MSKTITIADDVYYELVKMKGKRSFSEVLRELIGKKKEGNLDVLMIAFGTMDEEEAKELEEKIKEVGKWLNSWTPV</sequence>